<comment type="function">
    <text evidence="1">Catalyzes 2 different reactions between oxygen and the acireductone 1,2-dihydroxy-3-keto-5-methylthiopentene (DHK-MTPene) depending upon the metal bound in the active site. Fe-containing acireductone dioxygenase (Fe-ARD) produces formate and 2-keto-4-methylthiobutyrate (KMTB), the alpha-ketoacid precursor of methionine in the methionine recycle pathway. Ni-containing acireductone dioxygenase (Ni-ARD) produces methylthiopropionate, carbon monoxide and formate, and does not lie on the methionine recycle pathway.</text>
</comment>
<comment type="catalytic activity">
    <reaction evidence="1">
        <text>1,2-dihydroxy-5-(methylsulfanyl)pent-1-en-3-one + O2 = 3-(methylsulfanyl)propanoate + CO + formate + 2 H(+)</text>
        <dbReference type="Rhea" id="RHEA:14161"/>
        <dbReference type="ChEBI" id="CHEBI:15378"/>
        <dbReference type="ChEBI" id="CHEBI:15379"/>
        <dbReference type="ChEBI" id="CHEBI:15740"/>
        <dbReference type="ChEBI" id="CHEBI:17245"/>
        <dbReference type="ChEBI" id="CHEBI:49016"/>
        <dbReference type="ChEBI" id="CHEBI:49252"/>
        <dbReference type="EC" id="1.13.11.53"/>
    </reaction>
</comment>
<comment type="catalytic activity">
    <reaction evidence="1">
        <text>1,2-dihydroxy-5-(methylsulfanyl)pent-1-en-3-one + O2 = 4-methylsulfanyl-2-oxobutanoate + formate + 2 H(+)</text>
        <dbReference type="Rhea" id="RHEA:24504"/>
        <dbReference type="ChEBI" id="CHEBI:15378"/>
        <dbReference type="ChEBI" id="CHEBI:15379"/>
        <dbReference type="ChEBI" id="CHEBI:15740"/>
        <dbReference type="ChEBI" id="CHEBI:16723"/>
        <dbReference type="ChEBI" id="CHEBI:49252"/>
        <dbReference type="EC" id="1.13.11.54"/>
    </reaction>
</comment>
<comment type="cofactor">
    <cofactor evidence="1">
        <name>Fe(2+)</name>
        <dbReference type="ChEBI" id="CHEBI:29033"/>
    </cofactor>
    <text evidence="1">Binds 1 Fe(2+) cation per monomer.</text>
</comment>
<comment type="cofactor">
    <cofactor evidence="1">
        <name>Ni(2+)</name>
        <dbReference type="ChEBI" id="CHEBI:49786"/>
    </cofactor>
    <text evidence="1">Binds 1 nickel ion per monomer.</text>
</comment>
<comment type="pathway">
    <text evidence="1">Amino-acid biosynthesis; L-methionine biosynthesis via salvage pathway; L-methionine from S-methyl-5-thio-alpha-D-ribose 1-phosphate: step 5/6.</text>
</comment>
<comment type="subunit">
    <text evidence="1">Monomer.</text>
</comment>
<comment type="similarity">
    <text evidence="1">Belongs to the acireductone dioxygenase (ARD) family.</text>
</comment>
<feature type="chain" id="PRO_0000359217" description="Acireductone dioxygenase">
    <location>
        <begin position="1"/>
        <end position="181"/>
    </location>
</feature>
<feature type="binding site" evidence="1">
    <location>
        <position position="97"/>
    </location>
    <ligand>
        <name>Fe(2+)</name>
        <dbReference type="ChEBI" id="CHEBI:29033"/>
    </ligand>
</feature>
<feature type="binding site" evidence="1">
    <location>
        <position position="97"/>
    </location>
    <ligand>
        <name>Ni(2+)</name>
        <dbReference type="ChEBI" id="CHEBI:49786"/>
    </ligand>
</feature>
<feature type="binding site" evidence="1">
    <location>
        <position position="99"/>
    </location>
    <ligand>
        <name>Fe(2+)</name>
        <dbReference type="ChEBI" id="CHEBI:29033"/>
    </ligand>
</feature>
<feature type="binding site" evidence="1">
    <location>
        <position position="99"/>
    </location>
    <ligand>
        <name>Ni(2+)</name>
        <dbReference type="ChEBI" id="CHEBI:49786"/>
    </ligand>
</feature>
<feature type="binding site" evidence="1">
    <location>
        <position position="103"/>
    </location>
    <ligand>
        <name>Fe(2+)</name>
        <dbReference type="ChEBI" id="CHEBI:29033"/>
    </ligand>
</feature>
<feature type="binding site" evidence="1">
    <location>
        <position position="103"/>
    </location>
    <ligand>
        <name>Ni(2+)</name>
        <dbReference type="ChEBI" id="CHEBI:49786"/>
    </ligand>
</feature>
<feature type="binding site" evidence="1">
    <location>
        <position position="141"/>
    </location>
    <ligand>
        <name>Fe(2+)</name>
        <dbReference type="ChEBI" id="CHEBI:29033"/>
    </ligand>
</feature>
<feature type="binding site" evidence="1">
    <location>
        <position position="141"/>
    </location>
    <ligand>
        <name>Ni(2+)</name>
        <dbReference type="ChEBI" id="CHEBI:49786"/>
    </ligand>
</feature>
<feature type="site" description="May play a role in metal incorporation in vivo" evidence="1">
    <location>
        <position position="96"/>
    </location>
</feature>
<feature type="site" description="May play a role in transmitting local conformational changes" evidence="1">
    <location>
        <position position="102"/>
    </location>
</feature>
<feature type="site" description="Important to generate the dianion" evidence="1">
    <location>
        <position position="105"/>
    </location>
</feature>
<reference key="1">
    <citation type="journal article" date="2000" name="Nature">
        <title>Complete genome sequence of Pseudomonas aeruginosa PAO1, an opportunistic pathogen.</title>
        <authorList>
            <person name="Stover C.K."/>
            <person name="Pham X.-Q.T."/>
            <person name="Erwin A.L."/>
            <person name="Mizoguchi S.D."/>
            <person name="Warrener P."/>
            <person name="Hickey M.J."/>
            <person name="Brinkman F.S.L."/>
            <person name="Hufnagle W.O."/>
            <person name="Kowalik D.J."/>
            <person name="Lagrou M."/>
            <person name="Garber R.L."/>
            <person name="Goltry L."/>
            <person name="Tolentino E."/>
            <person name="Westbrock-Wadman S."/>
            <person name="Yuan Y."/>
            <person name="Brody L.L."/>
            <person name="Coulter S.N."/>
            <person name="Folger K.R."/>
            <person name="Kas A."/>
            <person name="Larbig K."/>
            <person name="Lim R.M."/>
            <person name="Smith K.A."/>
            <person name="Spencer D.H."/>
            <person name="Wong G.K.-S."/>
            <person name="Wu Z."/>
            <person name="Paulsen I.T."/>
            <person name="Reizer J."/>
            <person name="Saier M.H. Jr."/>
            <person name="Hancock R.E.W."/>
            <person name="Lory S."/>
            <person name="Olson M.V."/>
        </authorList>
    </citation>
    <scope>NUCLEOTIDE SEQUENCE [LARGE SCALE GENOMIC DNA]</scope>
    <source>
        <strain>ATCC 15692 / DSM 22644 / CIP 104116 / JCM 14847 / LMG 12228 / 1C / PRS 101 / PAO1</strain>
    </source>
</reference>
<sequence length="181" mass="20552">MSSLTVYHENQPEQPLKLLTHAEDIASTLAEVGVRFERWEAAAPIAAGASQDEVIAAYAHEIERLKRERGYITVDVVSLNSDHPQKAELRAKFLDEHRHGEDEVRFFVAGRGLFVLHIEEHVYAVLCERNDLISVPAGTRHWFDMGEHPHFVAVRLFNNPEGWVAQFTGDDIASRFPLLED</sequence>
<proteinExistence type="inferred from homology"/>
<gene>
    <name evidence="1" type="primary">mtnD</name>
    <name type="ordered locus">PA1684</name>
</gene>
<protein>
    <recommendedName>
        <fullName evidence="1">Acireductone dioxygenase</fullName>
    </recommendedName>
    <alternativeName>
        <fullName evidence="1">1,2-dihydroxy-3-keto-5-methylthiopentene dioxygenase</fullName>
        <shortName evidence="1">DHK-MTPene dioxygenase</shortName>
    </alternativeName>
    <alternativeName>
        <fullName evidence="1">Acireductone dioxygenase (Fe(2+)-requiring)</fullName>
        <shortName evidence="1">ARD'</shortName>
        <shortName evidence="1">Fe-ARD</shortName>
        <ecNumber evidence="1">1.13.11.54</ecNumber>
    </alternativeName>
    <alternativeName>
        <fullName evidence="1">Acireductone dioxygenase (Ni(2+)-requiring)</fullName>
        <shortName evidence="1">ARD</shortName>
        <shortName evidence="1">Ni-ARD</shortName>
        <ecNumber evidence="1">1.13.11.53</ecNumber>
    </alternativeName>
</protein>
<evidence type="ECO:0000255" key="1">
    <source>
        <dbReference type="HAMAP-Rule" id="MF_01682"/>
    </source>
</evidence>
<dbReference type="EC" id="1.13.11.54" evidence="1"/>
<dbReference type="EC" id="1.13.11.53" evidence="1"/>
<dbReference type="EMBL" id="AE004091">
    <property type="protein sequence ID" value="AAG05073.1"/>
    <property type="molecule type" value="Genomic_DNA"/>
</dbReference>
<dbReference type="PIR" id="E83436">
    <property type="entry name" value="E83436"/>
</dbReference>
<dbReference type="RefSeq" id="NP_250375.1">
    <property type="nucleotide sequence ID" value="NC_002516.2"/>
</dbReference>
<dbReference type="RefSeq" id="WP_003087656.1">
    <property type="nucleotide sequence ID" value="NZ_QZGE01000003.1"/>
</dbReference>
<dbReference type="SMR" id="Q9I341"/>
<dbReference type="STRING" id="208964.PA1684"/>
<dbReference type="PaxDb" id="208964-PA1684"/>
<dbReference type="DNASU" id="877764"/>
<dbReference type="GeneID" id="877764"/>
<dbReference type="KEGG" id="pae:PA1684"/>
<dbReference type="PATRIC" id="fig|208964.12.peg.1745"/>
<dbReference type="PseudoCAP" id="PA1684"/>
<dbReference type="HOGENOM" id="CLU_125400_0_0_6"/>
<dbReference type="InParanoid" id="Q9I341"/>
<dbReference type="OrthoDB" id="9795636at2"/>
<dbReference type="PhylomeDB" id="Q9I341"/>
<dbReference type="BioCyc" id="PAER208964:G1FZ6-1715-MONOMER"/>
<dbReference type="UniPathway" id="UPA00904">
    <property type="reaction ID" value="UER00878"/>
</dbReference>
<dbReference type="Proteomes" id="UP000002438">
    <property type="component" value="Chromosome"/>
</dbReference>
<dbReference type="GO" id="GO:0010308">
    <property type="term" value="F:acireductone dioxygenase (Ni2+-requiring) activity"/>
    <property type="evidence" value="ECO:0007669"/>
    <property type="project" value="UniProtKB-UniRule"/>
</dbReference>
<dbReference type="GO" id="GO:0010309">
    <property type="term" value="F:acireductone dioxygenase [iron(II)-requiring] activity"/>
    <property type="evidence" value="ECO:0000318"/>
    <property type="project" value="GO_Central"/>
</dbReference>
<dbReference type="GO" id="GO:0005506">
    <property type="term" value="F:iron ion binding"/>
    <property type="evidence" value="ECO:0007669"/>
    <property type="project" value="UniProtKB-UniRule"/>
</dbReference>
<dbReference type="GO" id="GO:0016151">
    <property type="term" value="F:nickel cation binding"/>
    <property type="evidence" value="ECO:0007669"/>
    <property type="project" value="UniProtKB-UniRule"/>
</dbReference>
<dbReference type="GO" id="GO:0019509">
    <property type="term" value="P:L-methionine salvage from methylthioadenosine"/>
    <property type="evidence" value="ECO:0007669"/>
    <property type="project" value="UniProtKB-UniRule"/>
</dbReference>
<dbReference type="GO" id="GO:0019284">
    <property type="term" value="P:L-methionine salvage from S-adenosylmethionine"/>
    <property type="evidence" value="ECO:0007669"/>
    <property type="project" value="InterPro"/>
</dbReference>
<dbReference type="GO" id="GO:0006555">
    <property type="term" value="P:methionine metabolic process"/>
    <property type="evidence" value="ECO:0000318"/>
    <property type="project" value="GO_Central"/>
</dbReference>
<dbReference type="CDD" id="cd02232">
    <property type="entry name" value="cupin_ARD"/>
    <property type="match status" value="1"/>
</dbReference>
<dbReference type="FunFam" id="2.60.120.10:FF:000056">
    <property type="entry name" value="Acireductone dioxygenase"/>
    <property type="match status" value="1"/>
</dbReference>
<dbReference type="Gene3D" id="2.60.120.10">
    <property type="entry name" value="Jelly Rolls"/>
    <property type="match status" value="1"/>
</dbReference>
<dbReference type="HAMAP" id="MF_01682">
    <property type="entry name" value="Salvage_MtnD"/>
    <property type="match status" value="1"/>
</dbReference>
<dbReference type="InterPro" id="IPR004313">
    <property type="entry name" value="ARD"/>
</dbReference>
<dbReference type="InterPro" id="IPR023956">
    <property type="entry name" value="ARD_bac"/>
</dbReference>
<dbReference type="InterPro" id="IPR014710">
    <property type="entry name" value="RmlC-like_jellyroll"/>
</dbReference>
<dbReference type="InterPro" id="IPR011051">
    <property type="entry name" value="RmlC_Cupin_sf"/>
</dbReference>
<dbReference type="PANTHER" id="PTHR23418">
    <property type="entry name" value="ACIREDUCTONE DIOXYGENASE"/>
    <property type="match status" value="1"/>
</dbReference>
<dbReference type="PANTHER" id="PTHR23418:SF0">
    <property type="entry name" value="ACIREDUCTONE DIOXYGENASE"/>
    <property type="match status" value="1"/>
</dbReference>
<dbReference type="Pfam" id="PF03079">
    <property type="entry name" value="ARD"/>
    <property type="match status" value="1"/>
</dbReference>
<dbReference type="SUPFAM" id="SSF51182">
    <property type="entry name" value="RmlC-like cupins"/>
    <property type="match status" value="1"/>
</dbReference>
<name>MTND_PSEAE</name>
<accession>Q9I341</accession>
<organism>
    <name type="scientific">Pseudomonas aeruginosa (strain ATCC 15692 / DSM 22644 / CIP 104116 / JCM 14847 / LMG 12228 / 1C / PRS 101 / PAO1)</name>
    <dbReference type="NCBI Taxonomy" id="208964"/>
    <lineage>
        <taxon>Bacteria</taxon>
        <taxon>Pseudomonadati</taxon>
        <taxon>Pseudomonadota</taxon>
        <taxon>Gammaproteobacteria</taxon>
        <taxon>Pseudomonadales</taxon>
        <taxon>Pseudomonadaceae</taxon>
        <taxon>Pseudomonas</taxon>
    </lineage>
</organism>
<keyword id="KW-0028">Amino-acid biosynthesis</keyword>
<keyword id="KW-0223">Dioxygenase</keyword>
<keyword id="KW-0408">Iron</keyword>
<keyword id="KW-0479">Metal-binding</keyword>
<keyword id="KW-0486">Methionine biosynthesis</keyword>
<keyword id="KW-0533">Nickel</keyword>
<keyword id="KW-0560">Oxidoreductase</keyword>
<keyword id="KW-1185">Reference proteome</keyword>